<proteinExistence type="inferred from homology"/>
<name>YOPJ_YERPS</name>
<geneLocation type="plasmid">
    <name>pYV</name>
</geneLocation>
<sequence length="288" mass="32487">MIGPISQINISGGLSEKETSSLISNEELKNIITQLETDISDGSWFHKNYSRMDVEVMPALVIQANNKYPEMNLNLVTSPLDLSIEIKNVIENGVRSSRFIINMGEGGIHFSVIDYKHINGKTSLILFEPANFNSMGPAMLAIRTKTAIERYQLPDCHFSMVEMDIQRSSSECGIFSFALAKKLYIERDSLLKIHEDNIKGILSDGENPLPHDKLDPYLPVTFYKHTQGKKRLNEYLNTNPQGVGTVVNKKNETIVNRFDNNKSIVDGKELSVSVHKKRIAEYKTLLKV</sequence>
<organism>
    <name type="scientific">Yersinia pseudotuberculosis serotype I (strain IP32953)</name>
    <dbReference type="NCBI Taxonomy" id="273123"/>
    <lineage>
        <taxon>Bacteria</taxon>
        <taxon>Pseudomonadati</taxon>
        <taxon>Pseudomonadota</taxon>
        <taxon>Gammaproteobacteria</taxon>
        <taxon>Enterobacterales</taxon>
        <taxon>Yersiniaceae</taxon>
        <taxon>Yersinia</taxon>
    </lineage>
</organism>
<protein>
    <recommendedName>
        <fullName evidence="5">Serine/threonine-protein acetyltransferase YopJ</fullName>
        <ecNumber evidence="1">2.3.1.-</ecNumber>
    </recommendedName>
    <alternativeName>
        <fullName>Virulence factor YopJ</fullName>
    </alternativeName>
</protein>
<feature type="chain" id="PRO_0000451625" description="Serine/threonine-protein acetyltransferase YopJ">
    <location>
        <begin position="1"/>
        <end position="288"/>
    </location>
</feature>
<feature type="active site" evidence="4">
    <location>
        <position position="109"/>
    </location>
</feature>
<feature type="active site" evidence="4">
    <location>
        <position position="128"/>
    </location>
</feature>
<feature type="active site" evidence="4">
    <location>
        <position position="172"/>
    </location>
</feature>
<feature type="binding site" evidence="4">
    <location>
        <position position="109"/>
    </location>
    <ligand>
        <name>CoA</name>
        <dbReference type="ChEBI" id="CHEBI:57287"/>
    </ligand>
</feature>
<feature type="binding site" evidence="4">
    <location>
        <begin position="167"/>
        <end position="168"/>
    </location>
    <ligand>
        <name>CoA</name>
        <dbReference type="ChEBI" id="CHEBI:57287"/>
    </ligand>
</feature>
<feature type="binding site" evidence="4">
    <location>
        <begin position="182"/>
        <end position="185"/>
    </location>
    <ligand>
        <name>1D-myo-inositol hexakisphosphate</name>
        <dbReference type="ChEBI" id="CHEBI:58130"/>
    </ligand>
</feature>
<feature type="binding site" evidence="4">
    <location>
        <begin position="224"/>
        <end position="225"/>
    </location>
    <ligand>
        <name>1D-myo-inositol hexakisphosphate</name>
        <dbReference type="ChEBI" id="CHEBI:58130"/>
    </ligand>
</feature>
<feature type="binding site" evidence="4">
    <location>
        <begin position="227"/>
        <end position="230"/>
    </location>
    <ligand>
        <name>CoA</name>
        <dbReference type="ChEBI" id="CHEBI:57287"/>
    </ligand>
</feature>
<feature type="binding site" evidence="4">
    <location>
        <position position="257"/>
    </location>
    <ligand>
        <name>1D-myo-inositol hexakisphosphate</name>
        <dbReference type="ChEBI" id="CHEBI:58130"/>
    </ligand>
</feature>
<feature type="binding site" evidence="4">
    <location>
        <begin position="266"/>
        <end position="270"/>
    </location>
    <ligand>
        <name>CoA</name>
        <dbReference type="ChEBI" id="CHEBI:57287"/>
    </ligand>
</feature>
<evidence type="ECO:0000250" key="1">
    <source>
        <dbReference type="UniProtKB" id="A0A0N9NCU6"/>
    </source>
</evidence>
<evidence type="ECO:0000250" key="2">
    <source>
        <dbReference type="UniProtKB" id="O68718"/>
    </source>
</evidence>
<evidence type="ECO:0000250" key="3">
    <source>
        <dbReference type="UniProtKB" id="P0DUD0"/>
    </source>
</evidence>
<evidence type="ECO:0000250" key="4">
    <source>
        <dbReference type="UniProtKB" id="Q6VE93"/>
    </source>
</evidence>
<evidence type="ECO:0000305" key="5"/>
<accession>P0DUC9</accession>
<accession>P31498</accession>
<accession>Q663G8</accession>
<accession>Q6J1F6</accession>
<reference key="1">
    <citation type="journal article" date="2004" name="Proc. Natl. Acad. Sci. U.S.A.">
        <title>Insights into the evolution of Yersinia pestis through whole-genome comparison with Yersinia pseudotuberculosis.</title>
        <authorList>
            <person name="Chain P.S.G."/>
            <person name="Carniel E."/>
            <person name="Larimer F.W."/>
            <person name="Lamerdin J."/>
            <person name="Stoutland P.O."/>
            <person name="Regala W.M."/>
            <person name="Georgescu A.M."/>
            <person name="Vergez L.M."/>
            <person name="Land M.L."/>
            <person name="Motin V.L."/>
            <person name="Brubaker R.R."/>
            <person name="Fowler J."/>
            <person name="Hinnebusch J."/>
            <person name="Marceau M."/>
            <person name="Medigue C."/>
            <person name="Simonet M."/>
            <person name="Chenal-Francisque V."/>
            <person name="Souza B."/>
            <person name="Dacheux D."/>
            <person name="Elliott J.M."/>
            <person name="Derbise A."/>
            <person name="Hauser L.J."/>
            <person name="Garcia E."/>
        </authorList>
    </citation>
    <scope>NUCLEOTIDE SEQUENCE [LARGE SCALE GENOMIC DNA]</scope>
    <source>
        <strain>IP32953</strain>
        <plasmid>pYV</plasmid>
    </source>
</reference>
<dbReference type="EC" id="2.3.1.-" evidence="1"/>
<dbReference type="EMBL" id="BX936399">
    <property type="protein sequence ID" value="CAF25441.1"/>
    <property type="molecule type" value="Genomic_DNA"/>
</dbReference>
<dbReference type="RefSeq" id="WP_002225474.1">
    <property type="nucleotide sequence ID" value="NC_006153.2"/>
</dbReference>
<dbReference type="SMR" id="P0DUC9"/>
<dbReference type="DIP" id="DIP-61317N"/>
<dbReference type="IntAct" id="P0DUC9">
    <property type="interactions" value="1"/>
</dbReference>
<dbReference type="KEGG" id="ypo:BZ17_4238"/>
<dbReference type="KEGG" id="yps:pYV0098"/>
<dbReference type="Proteomes" id="UP000001011">
    <property type="component" value="Plasmid pYV"/>
</dbReference>
<dbReference type="GO" id="GO:0005576">
    <property type="term" value="C:extracellular region"/>
    <property type="evidence" value="ECO:0007669"/>
    <property type="project" value="UniProtKB-SubCell"/>
</dbReference>
<dbReference type="GO" id="GO:0016746">
    <property type="term" value="F:acyltransferase activity"/>
    <property type="evidence" value="ECO:0007669"/>
    <property type="project" value="UniProtKB-KW"/>
</dbReference>
<dbReference type="InterPro" id="IPR005083">
    <property type="entry name" value="YopJ-like"/>
</dbReference>
<dbReference type="NCBIfam" id="NF011898">
    <property type="entry name" value="PRK15371.1"/>
    <property type="match status" value="1"/>
</dbReference>
<dbReference type="NCBIfam" id="NF040632">
    <property type="entry name" value="YopJ_YopP_only"/>
    <property type="match status" value="1"/>
</dbReference>
<dbReference type="Pfam" id="PF03421">
    <property type="entry name" value="Acetyltransf_14"/>
    <property type="match status" value="1"/>
</dbReference>
<gene>
    <name evidence="1" type="primary">yopJ</name>
    <name type="ordered locus">pYV0098</name>
</gene>
<keyword id="KW-0012">Acyltransferase</keyword>
<keyword id="KW-0021">Allosteric enzyme</keyword>
<keyword id="KW-0614">Plasmid</keyword>
<keyword id="KW-0964">Secreted</keyword>
<keyword id="KW-0808">Transferase</keyword>
<keyword id="KW-0843">Virulence</keyword>
<comment type="function">
    <text evidence="1 3">Serine/threonine-protein acetyltransferase translocated into infected cells, which inhibits the host immune response and induces cell death by mediating acetylation of target proteins. Inhibits the MAPK and NF-kappa-B signaling pathways by acetylating protein-kinases such as MAP2K1, MAP2K6, MAP3K7/TAK1 and I-kappa-B kinase (CHUK/IKKA and IKBKB) on serine and threonine residues critical for their activation by phosphorylation, thereby preventing protein-kinase activation. Promotes pyroptosis, a programmed cell death, in host cells by mediating acetylation of MAP3K7/TAK1: MAP3K7/TAK1 inactivation triggers activation of caspase-8 (CASP8), followed by CASP8-dependent cleavage of gasdermin-D (GSDMD) and induction of pyroptosis (By similarity). Also able to induce intestinal barrier dysfunction by acetylating and inhibiting host protein-kinases RIPK2/RICK and MAP3K7/TAK1, thereby promoting cell death (By similarity).</text>
</comment>
<comment type="catalytic activity">
    <reaction evidence="1">
        <text>L-threonyl-[protein] + acetyl-CoA = O-acetyl-L-threonyl-[protein] + CoA</text>
        <dbReference type="Rhea" id="RHEA:65340"/>
        <dbReference type="Rhea" id="RHEA-COMP:11060"/>
        <dbReference type="Rhea" id="RHEA-COMP:16780"/>
        <dbReference type="ChEBI" id="CHEBI:30013"/>
        <dbReference type="ChEBI" id="CHEBI:57287"/>
        <dbReference type="ChEBI" id="CHEBI:57288"/>
        <dbReference type="ChEBI" id="CHEBI:141025"/>
    </reaction>
    <physiologicalReaction direction="left-to-right" evidence="1">
        <dbReference type="Rhea" id="RHEA:65341"/>
    </physiologicalReaction>
</comment>
<comment type="catalytic activity">
    <reaction evidence="1">
        <text>L-seryl-[protein] + acetyl-CoA = O-acetyl-L-seryl-[protein] + CoA</text>
        <dbReference type="Rhea" id="RHEA:59392"/>
        <dbReference type="Rhea" id="RHEA-COMP:9863"/>
        <dbReference type="Rhea" id="RHEA-COMP:15352"/>
        <dbReference type="ChEBI" id="CHEBI:29999"/>
        <dbReference type="ChEBI" id="CHEBI:57287"/>
        <dbReference type="ChEBI" id="CHEBI:57288"/>
        <dbReference type="ChEBI" id="CHEBI:141128"/>
    </reaction>
    <physiologicalReaction direction="left-to-right" evidence="1">
        <dbReference type="Rhea" id="RHEA:59393"/>
    </physiologicalReaction>
</comment>
<comment type="cofactor">
    <cofactor evidence="2">
        <name>1D-myo-inositol hexakisphosphate</name>
        <dbReference type="ChEBI" id="CHEBI:58130"/>
    </cofactor>
</comment>
<comment type="activity regulation">
    <text evidence="4">1D-myo-inositol hexakisphosphate activates protein-acetyltransferase activity via an allosteric mechanism: 1D-myo-inositol hexakisphosphate-binding induces a conformational rearrangement that stimulates the interaction with acetyl-CoA.</text>
</comment>
<comment type="subcellular location">
    <subcellularLocation>
        <location evidence="3">Secreted</location>
    </subcellularLocation>
    <text evidence="3">Secreted via type III secretion system (T3SS).</text>
</comment>
<comment type="similarity">
    <text evidence="5">Belongs to the acetyltransferase YopJ family.</text>
</comment>